<feature type="chain" id="PRO_0000087450" description="Glycogen debranching enzyme">
    <location>
        <begin position="1"/>
        <end position="1532"/>
    </location>
</feature>
<feature type="region of interest" description="4-alpha-glucanotransferase">
    <location>
        <begin position="1"/>
        <end status="unknown"/>
    </location>
</feature>
<feature type="region of interest" description="Amylo-1,6-glucosidase">
    <location>
        <begin status="unknown"/>
        <end position="1532"/>
    </location>
</feature>
<feature type="active site" evidence="1">
    <location>
        <position position="526"/>
    </location>
</feature>
<feature type="active site" evidence="1">
    <location>
        <position position="529"/>
    </location>
</feature>
<feature type="active site" evidence="1">
    <location>
        <position position="627"/>
    </location>
</feature>
<feature type="modified residue" description="Phosphoserine" evidence="5">
    <location>
        <position position="64"/>
    </location>
</feature>
<feature type="splice variant" id="VSP_004270" description="In isoform 5." evidence="4">
    <original>MGHSKQIRILLLNEMEKLEKTLFRLEQ</original>
    <variation>MSLLTCAFYL</variation>
    <location>
        <begin position="1"/>
        <end position="27"/>
    </location>
</feature>
<feature type="splice variant" id="VSP_004271" description="In isoform 6." evidence="4">
    <original>MGHSKQIRILLLNEMEKLEKTLFRLEQ</original>
    <variation>MAPILSINLFI</variation>
    <location>
        <begin position="1"/>
        <end position="27"/>
    </location>
</feature>
<feature type="sequence variant" id="VAR_032084" description="In dbSNP:rs35278779.">
    <original>T</original>
    <variation>A</variation>
    <location>
        <position position="38"/>
    </location>
</feature>
<feature type="sequence variant" id="VAR_028051" description="In dbSNP:rs17121403.">
    <original>Q</original>
    <variation>R</variation>
    <location>
        <position position="229"/>
    </location>
</feature>
<feature type="sequence variant" id="VAR_009621" description="In dbSNP:rs17121464.">
    <original>R</original>
    <variation>Q</variation>
    <location>
        <position position="387"/>
    </location>
</feature>
<feature type="sequence variant" id="VAR_028052" description="In dbSNP:rs3736297.">
    <original>A</original>
    <variation>S</variation>
    <location>
        <position position="701"/>
    </location>
</feature>
<feature type="sequence variant" id="VAR_032085" description="In dbSNP:rs34714252.">
    <original>S</original>
    <variation>C</variation>
    <location>
        <position position="962"/>
    </location>
</feature>
<feature type="sequence variant" id="VAR_020389" description="In dbSNP:rs3753494.">
    <original>P</original>
    <variation>S</variation>
    <location>
        <position position="1067"/>
    </location>
</feature>
<feature type="sequence variant" id="VAR_009230" description="In dbSNP:rs2230307." evidence="2">
    <original>G</original>
    <variation>R</variation>
    <location>
        <position position="1115"/>
    </location>
</feature>
<feature type="sequence variant" id="VAR_028053" description="In dbSNP:rs2230308.">
    <original>I</original>
    <variation>N</variation>
    <location>
        <position position="1144"/>
    </location>
</feature>
<feature type="sequence variant" id="VAR_051010" description="In dbSNP:rs11807956.">
    <original>A</original>
    <variation>T</variation>
    <location>
        <position position="1207"/>
    </location>
</feature>
<feature type="sequence variant" id="VAR_028054" description="In dbSNP:rs12043139.">
    <original>R</original>
    <variation>H</variation>
    <location>
        <position position="1253"/>
    </location>
</feature>
<feature type="sequence variant" id="VAR_009622" description="In dbSNP:rs112795811.">
    <original>E</original>
    <variation>K</variation>
    <location>
        <position position="1343"/>
    </location>
</feature>
<feature type="sequence variant" id="VAR_009231" description="In GSD3; deficient in ability to bind glycogen; unstable due to enhanced ubiquitination; forms aggresomes upon proteasome impairment; dbSNP:rs118203964." evidence="2 3">
    <original>G</original>
    <variation>R</variation>
    <location>
        <position position="1448"/>
    </location>
</feature>
<feature type="sequence variant" id="VAR_028055" description="In dbSNP:rs12118058.">
    <original>R</original>
    <variation>G</variation>
    <location>
        <position position="1487"/>
    </location>
</feature>
<feature type="sequence conflict" description="In Ref. 1; AAB41040, 2; AAB48466/AAB48467/AAB48468/AAB48469/AAB48470 and 3." evidence="4" ref="1 2 3">
    <original>W</original>
    <variation>G</variation>
    <location>
        <position position="1398"/>
    </location>
</feature>
<feature type="sequence conflict" description="In Ref. 2; AAB48470." evidence="4" ref="2">
    <original>I</original>
    <variation>L</variation>
    <location sequence="P35573-3">
        <position position="4"/>
    </location>
</feature>
<organism>
    <name type="scientific">Homo sapiens</name>
    <name type="common">Human</name>
    <dbReference type="NCBI Taxonomy" id="9606"/>
    <lineage>
        <taxon>Eukaryota</taxon>
        <taxon>Metazoa</taxon>
        <taxon>Chordata</taxon>
        <taxon>Craniata</taxon>
        <taxon>Vertebrata</taxon>
        <taxon>Euteleostomi</taxon>
        <taxon>Mammalia</taxon>
        <taxon>Eutheria</taxon>
        <taxon>Euarchontoglires</taxon>
        <taxon>Primates</taxon>
        <taxon>Haplorrhini</taxon>
        <taxon>Catarrhini</taxon>
        <taxon>Hominidae</taxon>
        <taxon>Homo</taxon>
    </lineage>
</organism>
<proteinExistence type="evidence at protein level"/>
<sequence length="1532" mass="174764">MGHSKQIRILLLNEMEKLEKTLFRLEQGYELQFRLGPTLQGKAVTVYTNYPFPGETFNREKFRSLDWENPTEREDDSDKYCKLNLQQSGSFQYYFLQGNEKSGGGYIVVDPILRVGADNHVLPLDCVTLQTFLAKCLGPFDEWESRLRVAKESGYNMIHFTPLQTLGLSRSCYSLANQLELNPDFSRPNRKYTWNDVGQLVEKLKKEWNVICITDVVYNHTAANSKWIQEHPECAYNLVNSPHLKPAWVLDRALWRFSCDVAEGKYKEKGIPALIENDHHMNSIRKIIWEDIFPKLKLWEFFQVDVNKAVEQFRRLLTQENRRVTKSDPNQHLTIIQDPEYRRFGCTVDMNIALTTFIPHDKGPAAIEECCNWFHKRMEELNSEKHRLINYHQEQAVNCLLGNVFYERLAGHGPKLGPVTRKHPLVTRYFTFPFEEIDFSMEESMIHLPNKACFLMAHNGWVMGDDPLRNFAEPGSEVYLRRELICWGDSVKLRYGNKPEDCPYLWAHMKKYTEITATYFQGVRLDNCHSTPLHVAEYMLDAARNLQPNLYVVAELFTGSEDLDNVFVTRLGISSLIREAMSAYNSHEEGRLVYRYGGEPVGSFVQPCLRPLMPAIAHALFMDITHDNECPIVHRSAYDALPSTTIVSMACCASGSTRGYDELVPHQISVVSEERFYTKWNPEALPSNTGEVNFQSGIIAARCAISKLHQELGAKGFIQVYVDQVDEDIVAVTRHSPSIHQSVVAVSRTAFRNPKTSFYSKEVPQMCIPGKIEEVVLEARTIERNTKPYRKDENSINGTPDITVEIREHIQLNESKIVKQAGVATKGPNEYIQEIEFENLSPGSVIIFRVSLDPHAQVAVGILRNHLTQFSPHFKSGSLAVDNADPILKIPFASLASRLTLAELNQILYRCESEEKEDGGGCYDIPNWSALKYAGLQGLMSVLAEIRPKNDLGHPFCNNLRSGDWMIDYVSNRLISRSGTIAEVGKWLQAMFFYLKQIPRYLIPCYFDAILIGAYTTLLDTAWKQMSSFVQNGSTFVKHLSLGSVQLCGVGKFPSLPILSPALMDVPYRLNEITKEKEQCCVSLAAGLPHFSSGIFRCWGRDTFIALRGILLITGRYVEARNIILAFAGTLRHGLIPNLLGEGIYARYNCRDAVWWWLQCIQDYCKMVPNGLDILKCPVSRMYPTDDSAPLPAGTLDQPLFEVIQEAMQKHMQGIQFRERNAGPQIDRNMKDEGFNITAGVDEETGFVYGGNRFNCGTWMDKMGESDRARNRGIPATPRDGSAVEIVGLSKSAVRWLLELSKKNIFPYHEVTVKRHGKAIKVSYDEWNRKIQDNFEKLFHVSEDPSDLNEKHPNLVHKRGIYKDSYGASSPWCDYQLRPNFTIAMVVAPELFTTEKAWKALEIAEKKLLGPLGMKTLDPDDMVYCGIYDNALDNDNYNLAKGFNYHQGPEWLWPIGYFLRAKLYFSRLMGPETTAKTIVLVKNVLSRHYVHLERSPWKGLPELTNENAQYCPFSCETQAWSIATILETLYDL</sequence>
<keyword id="KW-0025">Alternative splicing</keyword>
<keyword id="KW-0963">Cytoplasm</keyword>
<keyword id="KW-0903">Direct protein sequencing</keyword>
<keyword id="KW-0225">Disease variant</keyword>
<keyword id="KW-0320">Glycogen biosynthesis</keyword>
<keyword id="KW-0322">Glycogen storage disease</keyword>
<keyword id="KW-0326">Glycosidase</keyword>
<keyword id="KW-0328">Glycosyltransferase</keyword>
<keyword id="KW-0378">Hydrolase</keyword>
<keyword id="KW-0511">Multifunctional enzyme</keyword>
<keyword id="KW-0597">Phosphoprotein</keyword>
<keyword id="KW-1267">Proteomics identification</keyword>
<keyword id="KW-1185">Reference proteome</keyword>
<keyword id="KW-0808">Transferase</keyword>
<keyword id="KW-0832">Ubl conjugation</keyword>
<evidence type="ECO:0000250" key="1"/>
<evidence type="ECO:0000269" key="2">
    <source>
    </source>
</evidence>
<evidence type="ECO:0000269" key="3">
    <source>
    </source>
</evidence>
<evidence type="ECO:0000305" key="4"/>
<evidence type="ECO:0007744" key="5">
    <source>
    </source>
</evidence>
<gene>
    <name type="primary">AGL</name>
    <name type="synonym">GDE</name>
</gene>
<dbReference type="EC" id="2.4.1.25"/>
<dbReference type="EC" id="3.2.1.33"/>
<dbReference type="EMBL" id="M85168">
    <property type="protein sequence ID" value="AAB41040.1"/>
    <property type="molecule type" value="mRNA"/>
</dbReference>
<dbReference type="EMBL" id="U84007">
    <property type="protein sequence ID" value="AAB48466.1"/>
    <property type="molecule type" value="mRNA"/>
</dbReference>
<dbReference type="EMBL" id="U84008">
    <property type="protein sequence ID" value="AAB48467.1"/>
    <property type="molecule type" value="mRNA"/>
</dbReference>
<dbReference type="EMBL" id="U84009">
    <property type="protein sequence ID" value="AAB48468.1"/>
    <property type="molecule type" value="mRNA"/>
</dbReference>
<dbReference type="EMBL" id="U84010">
    <property type="protein sequence ID" value="AAB48469.1"/>
    <property type="molecule type" value="mRNA"/>
</dbReference>
<dbReference type="EMBL" id="U84011">
    <property type="protein sequence ID" value="AAB48470.1"/>
    <property type="molecule type" value="mRNA"/>
</dbReference>
<dbReference type="EMBL" id="AB035443">
    <property type="protein sequence ID" value="BAA88405.1"/>
    <property type="molecule type" value="Genomic_DNA"/>
</dbReference>
<dbReference type="EMBL" id="AB208867">
    <property type="protein sequence ID" value="BAD92104.1"/>
    <property type="status" value="ALT_INIT"/>
    <property type="molecule type" value="mRNA"/>
</dbReference>
<dbReference type="EMBL" id="AC096949">
    <property type="status" value="NOT_ANNOTATED_CDS"/>
    <property type="molecule type" value="Genomic_DNA"/>
</dbReference>
<dbReference type="EMBL" id="CH471097">
    <property type="protein sequence ID" value="EAW72985.1"/>
    <property type="molecule type" value="Genomic_DNA"/>
</dbReference>
<dbReference type="EMBL" id="CH471097">
    <property type="protein sequence ID" value="EAW72982.1"/>
    <property type="molecule type" value="Genomic_DNA"/>
</dbReference>
<dbReference type="EMBL" id="CH471097">
    <property type="protein sequence ID" value="EAW72983.1"/>
    <property type="molecule type" value="Genomic_DNA"/>
</dbReference>
<dbReference type="EMBL" id="CH471097">
    <property type="protein sequence ID" value="EAW72987.1"/>
    <property type="molecule type" value="Genomic_DNA"/>
</dbReference>
<dbReference type="EMBL" id="BC078663">
    <property type="protein sequence ID" value="AAH78663.1"/>
    <property type="molecule type" value="mRNA"/>
</dbReference>
<dbReference type="CCDS" id="CCDS759.1">
    <molecule id="P35573-1"/>
</dbReference>
<dbReference type="CCDS" id="CCDS760.1">
    <molecule id="P35573-3"/>
</dbReference>
<dbReference type="RefSeq" id="NP_000019.2">
    <molecule id="P35573-1"/>
    <property type="nucleotide sequence ID" value="NM_000028.3"/>
</dbReference>
<dbReference type="RefSeq" id="NP_000633.2">
    <molecule id="P35573-1"/>
    <property type="nucleotide sequence ID" value="NM_000642.3"/>
</dbReference>
<dbReference type="RefSeq" id="NP_000634.2">
    <molecule id="P35573-1"/>
    <property type="nucleotide sequence ID" value="NM_000643.3"/>
</dbReference>
<dbReference type="RefSeq" id="NP_000635.2">
    <molecule id="P35573-1"/>
    <property type="nucleotide sequence ID" value="NM_000644.3"/>
</dbReference>
<dbReference type="RefSeq" id="NP_000637.2">
    <molecule id="P35573-3"/>
    <property type="nucleotide sequence ID" value="NM_000646.3"/>
</dbReference>
<dbReference type="RefSeq" id="NP_001412254.1">
    <molecule id="P35573-1"/>
    <property type="nucleotide sequence ID" value="NM_001425325.1"/>
</dbReference>
<dbReference type="RefSeq" id="XP_005270614.1">
    <molecule id="P35573-1"/>
    <property type="nucleotide sequence ID" value="XM_005270557.3"/>
</dbReference>
<dbReference type="RefSeq" id="XP_054190771.1">
    <molecule id="P35573-1"/>
    <property type="nucleotide sequence ID" value="XM_054334796.1"/>
</dbReference>
<dbReference type="SMR" id="P35573"/>
<dbReference type="BioGRID" id="106686">
    <property type="interactions" value="109"/>
</dbReference>
<dbReference type="FunCoup" id="P35573">
    <property type="interactions" value="991"/>
</dbReference>
<dbReference type="IntAct" id="P35573">
    <property type="interactions" value="33"/>
</dbReference>
<dbReference type="MINT" id="P35573"/>
<dbReference type="STRING" id="9606.ENSP00000294724"/>
<dbReference type="BindingDB" id="P35573"/>
<dbReference type="ChEMBL" id="CHEMBL5272"/>
<dbReference type="DrugCentral" id="P35573"/>
<dbReference type="CAZy" id="GH13">
    <property type="family name" value="Glycoside Hydrolase Family 13"/>
</dbReference>
<dbReference type="CAZy" id="GH133">
    <property type="family name" value="Glycoside Hydrolase Family 133"/>
</dbReference>
<dbReference type="GlyGen" id="P35573">
    <property type="glycosylation" value="2 sites, 1 O-linked glycan (2 sites)"/>
</dbReference>
<dbReference type="iPTMnet" id="P35573"/>
<dbReference type="PhosphoSitePlus" id="P35573"/>
<dbReference type="SwissPalm" id="P35573"/>
<dbReference type="BioMuta" id="AGL"/>
<dbReference type="DMDM" id="116242491"/>
<dbReference type="jPOST" id="P35573"/>
<dbReference type="MassIVE" id="P35573"/>
<dbReference type="PaxDb" id="9606-ENSP00000294724"/>
<dbReference type="PeptideAtlas" id="P35573"/>
<dbReference type="ProteomicsDB" id="55089">
    <molecule id="P35573-1"/>
</dbReference>
<dbReference type="ProteomicsDB" id="55090">
    <molecule id="P35573-2"/>
</dbReference>
<dbReference type="ProteomicsDB" id="55091">
    <molecule id="P35573-3"/>
</dbReference>
<dbReference type="Pumba" id="P35573"/>
<dbReference type="Antibodypedia" id="33684">
    <property type="antibodies" value="172 antibodies from 26 providers"/>
</dbReference>
<dbReference type="DNASU" id="178"/>
<dbReference type="Ensembl" id="ENST00000294724.8">
    <molecule id="P35573-1"/>
    <property type="protein sequence ID" value="ENSP00000294724.4"/>
    <property type="gene ID" value="ENSG00000162688.17"/>
</dbReference>
<dbReference type="Ensembl" id="ENST00000361915.8">
    <molecule id="P35573-1"/>
    <property type="protein sequence ID" value="ENSP00000355106.3"/>
    <property type="gene ID" value="ENSG00000162688.17"/>
</dbReference>
<dbReference type="Ensembl" id="ENST00000370161.6">
    <molecule id="P35573-3"/>
    <property type="protein sequence ID" value="ENSP00000359180.2"/>
    <property type="gene ID" value="ENSG00000162688.17"/>
</dbReference>
<dbReference type="Ensembl" id="ENST00000370163.7">
    <molecule id="P35573-1"/>
    <property type="protein sequence ID" value="ENSP00000359182.3"/>
    <property type="gene ID" value="ENSG00000162688.17"/>
</dbReference>
<dbReference type="Ensembl" id="ENST00000370165.7">
    <molecule id="P35573-1"/>
    <property type="protein sequence ID" value="ENSP00000359184.3"/>
    <property type="gene ID" value="ENSG00000162688.17"/>
</dbReference>
<dbReference type="GeneID" id="178"/>
<dbReference type="KEGG" id="hsa:178"/>
<dbReference type="MANE-Select" id="ENST00000361915.8">
    <property type="protein sequence ID" value="ENSP00000355106.3"/>
    <property type="RefSeq nucleotide sequence ID" value="NM_000642.3"/>
    <property type="RefSeq protein sequence ID" value="NP_000633.2"/>
</dbReference>
<dbReference type="UCSC" id="uc001dsi.2">
    <molecule id="P35573-1"/>
    <property type="organism name" value="human"/>
</dbReference>
<dbReference type="AGR" id="HGNC:321"/>
<dbReference type="CTD" id="178"/>
<dbReference type="DisGeNET" id="178"/>
<dbReference type="GeneCards" id="AGL"/>
<dbReference type="GeneReviews" id="AGL"/>
<dbReference type="HGNC" id="HGNC:321">
    <property type="gene designation" value="AGL"/>
</dbReference>
<dbReference type="HPA" id="ENSG00000162688">
    <property type="expression patterns" value="Group enriched (skeletal muscle, tongue)"/>
</dbReference>
<dbReference type="MalaCards" id="AGL"/>
<dbReference type="MIM" id="232400">
    <property type="type" value="phenotype"/>
</dbReference>
<dbReference type="MIM" id="610860">
    <property type="type" value="gene"/>
</dbReference>
<dbReference type="neXtProt" id="NX_P35573"/>
<dbReference type="OpenTargets" id="ENSG00000162688"/>
<dbReference type="Orphanet" id="366">
    <property type="disease" value="Glycogen storage disease due to glycogen debranching enzyme deficiency"/>
</dbReference>
<dbReference type="PharmGKB" id="PA24618"/>
<dbReference type="VEuPathDB" id="HostDB:ENSG00000162688"/>
<dbReference type="eggNOG" id="KOG3625">
    <property type="taxonomic scope" value="Eukaryota"/>
</dbReference>
<dbReference type="GeneTree" id="ENSGT00390000012596"/>
<dbReference type="HOGENOM" id="CLU_001517_2_0_1"/>
<dbReference type="InParanoid" id="P35573"/>
<dbReference type="OMA" id="YEEGHVH"/>
<dbReference type="OrthoDB" id="10248904at2759"/>
<dbReference type="PAN-GO" id="P35573">
    <property type="GO annotations" value="3 GO annotations based on evolutionary models"/>
</dbReference>
<dbReference type="PhylomeDB" id="P35573"/>
<dbReference type="TreeFam" id="TF300697"/>
<dbReference type="BioCyc" id="MetaCyc:HS08717-MONOMER"/>
<dbReference type="BRENDA" id="3.2.1.33">
    <property type="organism ID" value="2681"/>
</dbReference>
<dbReference type="PathwayCommons" id="P35573"/>
<dbReference type="Reactome" id="R-HSA-6798695">
    <property type="pathway name" value="Neutrophil degranulation"/>
</dbReference>
<dbReference type="Reactome" id="R-HSA-70221">
    <property type="pathway name" value="Glycogen breakdown (glycogenolysis)"/>
</dbReference>
<dbReference type="SignaLink" id="P35573"/>
<dbReference type="SIGNOR" id="P35573"/>
<dbReference type="BioGRID-ORCS" id="178">
    <property type="hits" value="28 hits in 1163 CRISPR screens"/>
</dbReference>
<dbReference type="GeneWiki" id="Glycogen_debranching_enzyme"/>
<dbReference type="GenomeRNAi" id="178"/>
<dbReference type="Pharos" id="P35573">
    <property type="development level" value="Tbio"/>
</dbReference>
<dbReference type="PRO" id="PR:P35573"/>
<dbReference type="Proteomes" id="UP000005640">
    <property type="component" value="Chromosome 1"/>
</dbReference>
<dbReference type="RNAct" id="P35573">
    <property type="molecule type" value="protein"/>
</dbReference>
<dbReference type="Bgee" id="ENSG00000162688">
    <property type="expression patterns" value="Expressed in vastus lateralis and 215 other cell types or tissues"/>
</dbReference>
<dbReference type="ExpressionAtlas" id="P35573">
    <property type="expression patterns" value="baseline and differential"/>
</dbReference>
<dbReference type="GO" id="GO:0005737">
    <property type="term" value="C:cytoplasm"/>
    <property type="evidence" value="ECO:0000314"/>
    <property type="project" value="UniProtKB"/>
</dbReference>
<dbReference type="GO" id="GO:0005829">
    <property type="term" value="C:cytosol"/>
    <property type="evidence" value="ECO:0000304"/>
    <property type="project" value="Reactome"/>
</dbReference>
<dbReference type="GO" id="GO:0005576">
    <property type="term" value="C:extracellular region"/>
    <property type="evidence" value="ECO:0000304"/>
    <property type="project" value="Reactome"/>
</dbReference>
<dbReference type="GO" id="GO:1904813">
    <property type="term" value="C:ficolin-1-rich granule lumen"/>
    <property type="evidence" value="ECO:0000304"/>
    <property type="project" value="Reactome"/>
</dbReference>
<dbReference type="GO" id="GO:0016234">
    <property type="term" value="C:inclusion body"/>
    <property type="evidence" value="ECO:0007669"/>
    <property type="project" value="Ensembl"/>
</dbReference>
<dbReference type="GO" id="GO:0043033">
    <property type="term" value="C:isoamylase complex"/>
    <property type="evidence" value="ECO:0000304"/>
    <property type="project" value="ProtInc"/>
</dbReference>
<dbReference type="GO" id="GO:0005634">
    <property type="term" value="C:nucleus"/>
    <property type="evidence" value="ECO:0007669"/>
    <property type="project" value="Ensembl"/>
</dbReference>
<dbReference type="GO" id="GO:0016529">
    <property type="term" value="C:sarcoplasmic reticulum"/>
    <property type="evidence" value="ECO:0007669"/>
    <property type="project" value="Ensembl"/>
</dbReference>
<dbReference type="GO" id="GO:0034774">
    <property type="term" value="C:secretory granule lumen"/>
    <property type="evidence" value="ECO:0000304"/>
    <property type="project" value="Reactome"/>
</dbReference>
<dbReference type="GO" id="GO:0004134">
    <property type="term" value="F:4-alpha-glucanotransferase activity"/>
    <property type="evidence" value="ECO:0000269"/>
    <property type="project" value="Reactome"/>
</dbReference>
<dbReference type="GO" id="GO:0004135">
    <property type="term" value="F:amylo-alpha-1,6-glucosidase activity"/>
    <property type="evidence" value="ECO:0000269"/>
    <property type="project" value="Reactome"/>
</dbReference>
<dbReference type="GO" id="GO:0004133">
    <property type="term" value="F:glycogen debranching enzyme activity"/>
    <property type="evidence" value="ECO:0000304"/>
    <property type="project" value="ProtInc"/>
</dbReference>
<dbReference type="GO" id="GO:0030247">
    <property type="term" value="F:polysaccharide binding"/>
    <property type="evidence" value="ECO:0007669"/>
    <property type="project" value="Ensembl"/>
</dbReference>
<dbReference type="GO" id="GO:0031593">
    <property type="term" value="F:polyubiquitin modification-dependent protein binding"/>
    <property type="evidence" value="ECO:0007669"/>
    <property type="project" value="Ensembl"/>
</dbReference>
<dbReference type="GO" id="GO:0005978">
    <property type="term" value="P:glycogen biosynthetic process"/>
    <property type="evidence" value="ECO:0007669"/>
    <property type="project" value="UniProtKB-KW"/>
</dbReference>
<dbReference type="GO" id="GO:0005980">
    <property type="term" value="P:glycogen catabolic process"/>
    <property type="evidence" value="ECO:0000318"/>
    <property type="project" value="GO_Central"/>
</dbReference>
<dbReference type="GO" id="GO:0051384">
    <property type="term" value="P:response to glucocorticoid"/>
    <property type="evidence" value="ECO:0007669"/>
    <property type="project" value="Ensembl"/>
</dbReference>
<dbReference type="GO" id="GO:0007584">
    <property type="term" value="P:response to nutrient"/>
    <property type="evidence" value="ECO:0007669"/>
    <property type="project" value="Ensembl"/>
</dbReference>
<dbReference type="CDD" id="cd11327">
    <property type="entry name" value="AmyAc_Glg_debranch_2"/>
    <property type="match status" value="1"/>
</dbReference>
<dbReference type="FunFam" id="3.20.20.80:FF:000291">
    <property type="entry name" value="Amylo-alpha-1, 6-glucosidase, 4-alpha-glucanotransferase a"/>
    <property type="match status" value="1"/>
</dbReference>
<dbReference type="FunFam" id="1.50.10.10:FF:000039">
    <property type="entry name" value="Glycogen debranching enzyme Gdb1, putative"/>
    <property type="match status" value="1"/>
</dbReference>
<dbReference type="FunFam" id="3.20.20.80:FF:000051">
    <property type="entry name" value="glycogen debranching enzyme isoform X2"/>
    <property type="match status" value="1"/>
</dbReference>
<dbReference type="Gene3D" id="3.20.20.80">
    <property type="entry name" value="Glycosidases"/>
    <property type="match status" value="2"/>
</dbReference>
<dbReference type="InterPro" id="IPR008928">
    <property type="entry name" value="6-hairpin_glycosidase_sf"/>
</dbReference>
<dbReference type="InterPro" id="IPR010401">
    <property type="entry name" value="AGL/Gdb1"/>
</dbReference>
<dbReference type="InterPro" id="IPR032788">
    <property type="entry name" value="AGL_central"/>
</dbReference>
<dbReference type="InterPro" id="IPR029436">
    <property type="entry name" value="AGL_euk_N"/>
</dbReference>
<dbReference type="InterPro" id="IPR032792">
    <property type="entry name" value="AGL_glucanoTrfase"/>
</dbReference>
<dbReference type="InterPro" id="IPR032790">
    <property type="entry name" value="GDE_C"/>
</dbReference>
<dbReference type="InterPro" id="IPR006421">
    <property type="entry name" value="Glycogen_debranch_met"/>
</dbReference>
<dbReference type="InterPro" id="IPR017853">
    <property type="entry name" value="Glycoside_hydrolase_SF"/>
</dbReference>
<dbReference type="NCBIfam" id="TIGR01531">
    <property type="entry name" value="glyc_debranch"/>
    <property type="match status" value="1"/>
</dbReference>
<dbReference type="PANTHER" id="PTHR10569">
    <property type="entry name" value="GLYCOGEN DEBRANCHING ENZYME"/>
    <property type="match status" value="1"/>
</dbReference>
<dbReference type="PANTHER" id="PTHR10569:SF2">
    <property type="entry name" value="GLYCOGEN DEBRANCHING ENZYME"/>
    <property type="match status" value="1"/>
</dbReference>
<dbReference type="Pfam" id="PF06202">
    <property type="entry name" value="GDE_C"/>
    <property type="match status" value="1"/>
</dbReference>
<dbReference type="Pfam" id="PF14701">
    <property type="entry name" value="hDGE_amylase"/>
    <property type="match status" value="1"/>
</dbReference>
<dbReference type="Pfam" id="PF14702">
    <property type="entry name" value="hGDE_central"/>
    <property type="match status" value="1"/>
</dbReference>
<dbReference type="Pfam" id="PF14699">
    <property type="entry name" value="hGDE_N"/>
    <property type="match status" value="1"/>
</dbReference>
<dbReference type="SUPFAM" id="SSF51445">
    <property type="entry name" value="(Trans)glycosidases"/>
    <property type="match status" value="1"/>
</dbReference>
<dbReference type="SUPFAM" id="SSF48208">
    <property type="entry name" value="Six-hairpin glycosidases"/>
    <property type="match status" value="1"/>
</dbReference>
<comment type="function">
    <text>Multifunctional enzyme acting as 1,4-alpha-D-glucan:1,4-alpha-D-glucan 4-alpha-D-glycosyltransferase and amylo-1,6-glucosidase in glycogen degradation.</text>
</comment>
<comment type="catalytic activity">
    <reaction>
        <text>Transfers a segment of a (1-&gt;4)-alpha-D-glucan to a new position in an acceptor, which may be glucose or a (1-&gt;4)-alpha-D-glucan.</text>
        <dbReference type="EC" id="2.4.1.25"/>
    </reaction>
</comment>
<comment type="catalytic activity">
    <reaction>
        <text>Hydrolysis of (1-&gt;6)-alpha-D-glucosidic branch linkages in glycogen phosphorylase limit dextrin.</text>
        <dbReference type="EC" id="3.2.1.33"/>
    </reaction>
</comment>
<comment type="subunit">
    <text evidence="3">Monomer. Interacts with NHLRC1/malin.</text>
</comment>
<comment type="subcellular location">
    <subcellularLocation>
        <location evidence="3">Cytoplasm</location>
    </subcellularLocation>
    <text>Under glycogenolytic conditions localizes to the nucleus.</text>
</comment>
<comment type="alternative products">
    <event type="alternative splicing"/>
    <isoform>
        <id>P35573-1</id>
        <name>1</name>
        <name>2</name>
        <name>3</name>
        <name>4</name>
        <sequence type="displayed"/>
    </isoform>
    <isoform>
        <id>P35573-2</id>
        <name>5</name>
        <sequence type="described" ref="VSP_004270"/>
    </isoform>
    <isoform>
        <id>P35573-3</id>
        <name>6</name>
        <sequence type="described" ref="VSP_004271"/>
    </isoform>
</comment>
<comment type="tissue specificity">
    <text>Liver, kidney and lymphoblastoid cells express predominantly isoform 1; whereas muscle and heart express not only isoform 1, but also muscle-specific isoform mRNAs (isoforms 2, 3 and 4). Isoforms 5 and 6 are present in both liver and muscle.</text>
</comment>
<comment type="PTM">
    <text>The N-terminus is blocked.</text>
</comment>
<comment type="PTM">
    <text evidence="3">Ubiquitinated.</text>
</comment>
<comment type="disease" evidence="2 3">
    <disease id="DI-00523">
        <name>Glycogen storage disease 3</name>
        <acronym>GSD3</acronym>
        <description>A metabolic disorder associated with an accumulation of abnormal glycogen with short outer chains. It is clinically characterized by hepatomegaly, hypoglycemia, short stature, and variable myopathy. Glycogen storage disease type 3 includes different forms: GSD type 3A patients lack glycogen debrancher enzyme activity in both liver and muscle, while GSD type 3B patients are enzyme-deficient in liver only. In rare cases, selective loss of only 1 of the 2 debranching activities, glucosidase or transferase, results in GSD type 3C or type 3D, respectively.</description>
        <dbReference type="MIM" id="232400"/>
    </disease>
    <text>The disease is caused by variants affecting the gene represented in this entry.</text>
</comment>
<comment type="miscellaneous">
    <molecule>Isoform 1</molecule>
    <text>The products of the mRNAs termed isoforms 1 to 4 are identical.</text>
</comment>
<comment type="similarity">
    <text evidence="4">Belongs to the glycogen debranching enzyme family.</text>
</comment>
<comment type="sequence caution" evidence="4">
    <conflict type="erroneous initiation">
        <sequence resource="EMBL-CDS" id="BAD92104"/>
    </conflict>
</comment>
<accession>P35573</accession>
<accession>A6NCX7</accession>
<accession>A6NEK2</accession>
<accession>D3DT51</accession>
<accession>P78354</accession>
<accession>P78544</accession>
<accession>Q59H92</accession>
<accession>Q6AZ90</accession>
<accession>Q9UF08</accession>
<reference key="1">
    <citation type="journal article" date="1992" name="J. Biol. Chem.">
        <title>Molecular cloning and nucleotide sequence of cDNA encoding human muscle glycogen debranching enzyme.</title>
        <authorList>
            <person name="Yang B.-Z."/>
            <person name="Ding J.-H."/>
            <person name="Enghild J.J."/>
            <person name="Bao Y."/>
            <person name="Chen Y.-T."/>
        </authorList>
    </citation>
    <scope>NUCLEOTIDE SEQUENCE [MRNA]</scope>
    <scope>PARTIAL PROTEIN SEQUENCE (ISOFORM 5)</scope>
    <source>
        <tissue>Muscle</tissue>
    </source>
</reference>
<reference key="2">
    <citation type="journal article" date="1996" name="Genomics">
        <title>Human glycogen debranching enzyme gene (AGL): complete structural organization and characterization of the 5' flanking region.</title>
        <authorList>
            <person name="Bao Y."/>
            <person name="Dawson T.L. Jr."/>
            <person name="Chen Y.-T."/>
        </authorList>
    </citation>
    <scope>NUCLEOTIDE SEQUENCE [MRNA]</scope>
    <scope>ALTERNATIVE SPLICING</scope>
</reference>
<reference key="3">
    <citation type="journal article" date="1997" name="Gene">
        <title>Isolation and nucleotide sequence of human liver glycogen debranching enzyme mRNA: identification of multiple tissue-specific isoforms.</title>
        <authorList>
            <person name="Bao Y."/>
            <person name="Yang B.-Z."/>
            <person name="Dawson T.L. Jr."/>
            <person name="Chen Y.-T."/>
        </authorList>
    </citation>
    <scope>NUCLEOTIDE SEQUENCE [MRNA]</scope>
    <scope>ALTERNATIVE SPLICING</scope>
    <source>
        <tissue>Liver</tissue>
    </source>
</reference>
<reference key="4">
    <citation type="journal article" date="2000" name="Hum. Genet.">
        <title>Heterogeneous mutations in the glycogen-debranching enzyme gene are responsible for glycogen storage disease type IIIa in Japan.</title>
        <authorList>
            <person name="Okubo M."/>
            <person name="Horinishi A."/>
            <person name="Takeuchi M."/>
            <person name="Suzuki Y."/>
            <person name="Sakura N."/>
            <person name="Hasegawa Y."/>
            <person name="Igarashi T."/>
            <person name="Goto K."/>
            <person name="Tahara H."/>
            <person name="Uchimoto S."/>
            <person name="Omichi K."/>
            <person name="Kanno H."/>
            <person name="Hayasaka K."/>
            <person name="Murase T."/>
        </authorList>
    </citation>
    <scope>NUCLEOTIDE SEQUENCE [GENOMIC DNA] (ISOFORM 1)</scope>
    <scope>VARIANTS</scope>
</reference>
<reference key="5">
    <citation type="submission" date="2005-03" db="EMBL/GenBank/DDBJ databases">
        <authorList>
            <person name="Totoki Y."/>
            <person name="Toyoda A."/>
            <person name="Takeda T."/>
            <person name="Sakaki Y."/>
            <person name="Tanaka A."/>
            <person name="Yokoyama S."/>
            <person name="Ohara O."/>
            <person name="Nagase T."/>
            <person name="Kikuno R.F."/>
        </authorList>
    </citation>
    <scope>NUCLEOTIDE SEQUENCE [LARGE SCALE MRNA] (ISOFORM 1)</scope>
    <source>
        <tissue>Brain</tissue>
    </source>
</reference>
<reference key="6">
    <citation type="journal article" date="2006" name="Nature">
        <title>The DNA sequence and biological annotation of human chromosome 1.</title>
        <authorList>
            <person name="Gregory S.G."/>
            <person name="Barlow K.F."/>
            <person name="McLay K.E."/>
            <person name="Kaul R."/>
            <person name="Swarbreck D."/>
            <person name="Dunham A."/>
            <person name="Scott C.E."/>
            <person name="Howe K.L."/>
            <person name="Woodfine K."/>
            <person name="Spencer C.C.A."/>
            <person name="Jones M.C."/>
            <person name="Gillson C."/>
            <person name="Searle S."/>
            <person name="Zhou Y."/>
            <person name="Kokocinski F."/>
            <person name="McDonald L."/>
            <person name="Evans R."/>
            <person name="Phillips K."/>
            <person name="Atkinson A."/>
            <person name="Cooper R."/>
            <person name="Jones C."/>
            <person name="Hall R.E."/>
            <person name="Andrews T.D."/>
            <person name="Lloyd C."/>
            <person name="Ainscough R."/>
            <person name="Almeida J.P."/>
            <person name="Ambrose K.D."/>
            <person name="Anderson F."/>
            <person name="Andrew R.W."/>
            <person name="Ashwell R.I.S."/>
            <person name="Aubin K."/>
            <person name="Babbage A.K."/>
            <person name="Bagguley C.L."/>
            <person name="Bailey J."/>
            <person name="Beasley H."/>
            <person name="Bethel G."/>
            <person name="Bird C.P."/>
            <person name="Bray-Allen S."/>
            <person name="Brown J.Y."/>
            <person name="Brown A.J."/>
            <person name="Buckley D."/>
            <person name="Burton J."/>
            <person name="Bye J."/>
            <person name="Carder C."/>
            <person name="Chapman J.C."/>
            <person name="Clark S.Y."/>
            <person name="Clarke G."/>
            <person name="Clee C."/>
            <person name="Cobley V."/>
            <person name="Collier R.E."/>
            <person name="Corby N."/>
            <person name="Coville G.J."/>
            <person name="Davies J."/>
            <person name="Deadman R."/>
            <person name="Dunn M."/>
            <person name="Earthrowl M."/>
            <person name="Ellington A.G."/>
            <person name="Errington H."/>
            <person name="Frankish A."/>
            <person name="Frankland J."/>
            <person name="French L."/>
            <person name="Garner P."/>
            <person name="Garnett J."/>
            <person name="Gay L."/>
            <person name="Ghori M.R.J."/>
            <person name="Gibson R."/>
            <person name="Gilby L.M."/>
            <person name="Gillett W."/>
            <person name="Glithero R.J."/>
            <person name="Grafham D.V."/>
            <person name="Griffiths C."/>
            <person name="Griffiths-Jones S."/>
            <person name="Grocock R."/>
            <person name="Hammond S."/>
            <person name="Harrison E.S.I."/>
            <person name="Hart E."/>
            <person name="Haugen E."/>
            <person name="Heath P.D."/>
            <person name="Holmes S."/>
            <person name="Holt K."/>
            <person name="Howden P.J."/>
            <person name="Hunt A.R."/>
            <person name="Hunt S.E."/>
            <person name="Hunter G."/>
            <person name="Isherwood J."/>
            <person name="James R."/>
            <person name="Johnson C."/>
            <person name="Johnson D."/>
            <person name="Joy A."/>
            <person name="Kay M."/>
            <person name="Kershaw J.K."/>
            <person name="Kibukawa M."/>
            <person name="Kimberley A.M."/>
            <person name="King A."/>
            <person name="Knights A.J."/>
            <person name="Lad H."/>
            <person name="Laird G."/>
            <person name="Lawlor S."/>
            <person name="Leongamornlert D.A."/>
            <person name="Lloyd D.M."/>
            <person name="Loveland J."/>
            <person name="Lovell J."/>
            <person name="Lush M.J."/>
            <person name="Lyne R."/>
            <person name="Martin S."/>
            <person name="Mashreghi-Mohammadi M."/>
            <person name="Matthews L."/>
            <person name="Matthews N.S.W."/>
            <person name="McLaren S."/>
            <person name="Milne S."/>
            <person name="Mistry S."/>
            <person name="Moore M.J.F."/>
            <person name="Nickerson T."/>
            <person name="O'Dell C.N."/>
            <person name="Oliver K."/>
            <person name="Palmeiri A."/>
            <person name="Palmer S.A."/>
            <person name="Parker A."/>
            <person name="Patel D."/>
            <person name="Pearce A.V."/>
            <person name="Peck A.I."/>
            <person name="Pelan S."/>
            <person name="Phelps K."/>
            <person name="Phillimore B.J."/>
            <person name="Plumb R."/>
            <person name="Rajan J."/>
            <person name="Raymond C."/>
            <person name="Rouse G."/>
            <person name="Saenphimmachak C."/>
            <person name="Sehra H.K."/>
            <person name="Sheridan E."/>
            <person name="Shownkeen R."/>
            <person name="Sims S."/>
            <person name="Skuce C.D."/>
            <person name="Smith M."/>
            <person name="Steward C."/>
            <person name="Subramanian S."/>
            <person name="Sycamore N."/>
            <person name="Tracey A."/>
            <person name="Tromans A."/>
            <person name="Van Helmond Z."/>
            <person name="Wall M."/>
            <person name="Wallis J.M."/>
            <person name="White S."/>
            <person name="Whitehead S.L."/>
            <person name="Wilkinson J.E."/>
            <person name="Willey D.L."/>
            <person name="Williams H."/>
            <person name="Wilming L."/>
            <person name="Wray P.W."/>
            <person name="Wu Z."/>
            <person name="Coulson A."/>
            <person name="Vaudin M."/>
            <person name="Sulston J.E."/>
            <person name="Durbin R.M."/>
            <person name="Hubbard T."/>
            <person name="Wooster R."/>
            <person name="Dunham I."/>
            <person name="Carter N.P."/>
            <person name="McVean G."/>
            <person name="Ross M.T."/>
            <person name="Harrow J."/>
            <person name="Olson M.V."/>
            <person name="Beck S."/>
            <person name="Rogers J."/>
            <person name="Bentley D.R."/>
        </authorList>
    </citation>
    <scope>NUCLEOTIDE SEQUENCE [LARGE SCALE GENOMIC DNA]</scope>
</reference>
<reference key="7">
    <citation type="submission" date="2005-09" db="EMBL/GenBank/DDBJ databases">
        <authorList>
            <person name="Mural R.J."/>
            <person name="Istrail S."/>
            <person name="Sutton G.G."/>
            <person name="Florea L."/>
            <person name="Halpern A.L."/>
            <person name="Mobarry C.M."/>
            <person name="Lippert R."/>
            <person name="Walenz B."/>
            <person name="Shatkay H."/>
            <person name="Dew I."/>
            <person name="Miller J.R."/>
            <person name="Flanigan M.J."/>
            <person name="Edwards N.J."/>
            <person name="Bolanos R."/>
            <person name="Fasulo D."/>
            <person name="Halldorsson B.V."/>
            <person name="Hannenhalli S."/>
            <person name="Turner R."/>
            <person name="Yooseph S."/>
            <person name="Lu F."/>
            <person name="Nusskern D.R."/>
            <person name="Shue B.C."/>
            <person name="Zheng X.H."/>
            <person name="Zhong F."/>
            <person name="Delcher A.L."/>
            <person name="Huson D.H."/>
            <person name="Kravitz S.A."/>
            <person name="Mouchard L."/>
            <person name="Reinert K."/>
            <person name="Remington K.A."/>
            <person name="Clark A.G."/>
            <person name="Waterman M.S."/>
            <person name="Eichler E.E."/>
            <person name="Adams M.D."/>
            <person name="Hunkapiller M.W."/>
            <person name="Myers E.W."/>
            <person name="Venter J.C."/>
        </authorList>
    </citation>
    <scope>NUCLEOTIDE SEQUENCE [LARGE SCALE GENOMIC DNA]</scope>
</reference>
<reference key="8">
    <citation type="journal article" date="2004" name="Genome Res.">
        <title>The status, quality, and expansion of the NIH full-length cDNA project: the Mammalian Gene Collection (MGC).</title>
        <authorList>
            <consortium name="The MGC Project Team"/>
        </authorList>
    </citation>
    <scope>NUCLEOTIDE SEQUENCE [LARGE SCALE MRNA] (ISOFORM 1)</scope>
</reference>
<reference key="9">
    <citation type="journal article" date="2007" name="Genes Dev.">
        <title>A role for AGL ubiquitination in the glycogen storage disorders of Lafora and Cori's disease.</title>
        <authorList>
            <person name="Cheng A."/>
            <person name="Zhang M."/>
            <person name="Gentry M.S."/>
            <person name="Worby C.A."/>
            <person name="Dixon J.E."/>
            <person name="Saltiel A.R."/>
        </authorList>
    </citation>
    <scope>UBIQUITINATION</scope>
    <scope>CHARACTERIZATION OF VARIANT GSD3 ARG-1448</scope>
    <scope>INTERACTION WITH NHLRC1</scope>
    <scope>SUBCELLULAR LOCATION</scope>
</reference>
<reference key="10">
    <citation type="journal article" date="2011" name="BMC Syst. Biol.">
        <title>Initial characterization of the human central proteome.</title>
        <authorList>
            <person name="Burkard T.R."/>
            <person name="Planyavsky M."/>
            <person name="Kaupe I."/>
            <person name="Breitwieser F.P."/>
            <person name="Buerckstuemmer T."/>
            <person name="Bennett K.L."/>
            <person name="Superti-Furga G."/>
            <person name="Colinge J."/>
        </authorList>
    </citation>
    <scope>IDENTIFICATION BY MASS SPECTROMETRY [LARGE SCALE ANALYSIS]</scope>
</reference>
<reference key="11">
    <citation type="journal article" date="2014" name="J. Proteomics">
        <title>An enzyme assisted RP-RPLC approach for in-depth analysis of human liver phosphoproteome.</title>
        <authorList>
            <person name="Bian Y."/>
            <person name="Song C."/>
            <person name="Cheng K."/>
            <person name="Dong M."/>
            <person name="Wang F."/>
            <person name="Huang J."/>
            <person name="Sun D."/>
            <person name="Wang L."/>
            <person name="Ye M."/>
            <person name="Zou H."/>
        </authorList>
    </citation>
    <scope>PHOSPHORYLATION [LARGE SCALE ANALYSIS] AT SER-64</scope>
    <scope>IDENTIFICATION BY MASS SPECTROMETRY [LARGE SCALE ANALYSIS]</scope>
    <source>
        <tissue>Liver</tissue>
    </source>
</reference>
<reference key="12">
    <citation type="journal article" date="1999" name="Hum. Mutat.">
        <title>Glycogen storage disease type IIIa: first report of a causative missense mutation (G1448R) of the glycogen debranching enzyme gene found in a homozygous patient.</title>
        <authorList>
            <person name="Okubo M."/>
            <person name="Kanda F."/>
            <person name="Horinishi A."/>
            <person name="Takahashi K."/>
            <person name="Okuda S."/>
            <person name="Chihara K."/>
            <person name="Murase T."/>
        </authorList>
    </citation>
    <scope>VARIANT GSD3 ARG-1448</scope>
    <scope>VARIANT ARG-1115</scope>
</reference>
<name>GDE_HUMAN</name>
<protein>
    <recommendedName>
        <fullName>Glycogen debranching enzyme</fullName>
    </recommendedName>
    <alternativeName>
        <fullName>Glycogen debrancher</fullName>
    </alternativeName>
    <domain>
        <recommendedName>
            <fullName>4-alpha-glucanotransferase</fullName>
            <ecNumber>2.4.1.25</ecNumber>
        </recommendedName>
        <alternativeName>
            <fullName>Oligo-1,4-1,4-glucantransferase</fullName>
        </alternativeName>
    </domain>
    <domain>
        <recommendedName>
            <fullName>Amylo-alpha-1,6-glucosidase</fullName>
            <shortName>Amylo-1,6-glucosidase</shortName>
            <ecNumber>3.2.1.33</ecNumber>
        </recommendedName>
        <alternativeName>
            <fullName>Dextrin 6-alpha-D-glucosidase</fullName>
        </alternativeName>
    </domain>
</protein>